<feature type="chain" id="PRO_0000232123" description="NAD-capped RNA hydrolase NudC">
    <location>
        <begin position="1"/>
        <end position="257"/>
    </location>
</feature>
<feature type="domain" description="Nudix hydrolase" evidence="1">
    <location>
        <begin position="125"/>
        <end position="248"/>
    </location>
</feature>
<feature type="short sequence motif" description="Nudix box" evidence="1">
    <location>
        <begin position="159"/>
        <end position="180"/>
    </location>
</feature>
<feature type="binding site" evidence="1">
    <location>
        <position position="25"/>
    </location>
    <ligand>
        <name>substrate</name>
    </ligand>
</feature>
<feature type="binding site" evidence="1">
    <location>
        <position position="69"/>
    </location>
    <ligand>
        <name>substrate</name>
    </ligand>
</feature>
<feature type="binding site" evidence="1">
    <location>
        <position position="98"/>
    </location>
    <ligand>
        <name>Zn(2+)</name>
        <dbReference type="ChEBI" id="CHEBI:29105"/>
    </ligand>
</feature>
<feature type="binding site" evidence="1">
    <location>
        <position position="101"/>
    </location>
    <ligand>
        <name>Zn(2+)</name>
        <dbReference type="ChEBI" id="CHEBI:29105"/>
    </ligand>
</feature>
<feature type="binding site" evidence="1">
    <location>
        <position position="111"/>
    </location>
    <ligand>
        <name>substrate</name>
    </ligand>
</feature>
<feature type="binding site" evidence="1">
    <location>
        <position position="116"/>
    </location>
    <ligand>
        <name>Zn(2+)</name>
        <dbReference type="ChEBI" id="CHEBI:29105"/>
    </ligand>
</feature>
<feature type="binding site" evidence="1">
    <location>
        <position position="119"/>
    </location>
    <ligand>
        <name>Zn(2+)</name>
        <dbReference type="ChEBI" id="CHEBI:29105"/>
    </ligand>
</feature>
<feature type="binding site" evidence="1">
    <location>
        <position position="124"/>
    </location>
    <ligand>
        <name>substrate</name>
    </ligand>
</feature>
<feature type="binding site" evidence="1">
    <location>
        <position position="158"/>
    </location>
    <ligand>
        <name>a divalent metal cation</name>
        <dbReference type="ChEBI" id="CHEBI:60240"/>
        <label>1</label>
    </ligand>
</feature>
<feature type="binding site" evidence="1">
    <location>
        <position position="174"/>
    </location>
    <ligand>
        <name>a divalent metal cation</name>
        <dbReference type="ChEBI" id="CHEBI:60240"/>
        <label>2</label>
    </ligand>
</feature>
<feature type="binding site" evidence="1">
    <location>
        <position position="174"/>
    </location>
    <ligand>
        <name>a divalent metal cation</name>
        <dbReference type="ChEBI" id="CHEBI:60240"/>
        <label>3</label>
    </ligand>
</feature>
<feature type="binding site" evidence="1">
    <location>
        <position position="178"/>
    </location>
    <ligand>
        <name>a divalent metal cation</name>
        <dbReference type="ChEBI" id="CHEBI:60240"/>
        <label>1</label>
    </ligand>
</feature>
<feature type="binding site" evidence="1">
    <location>
        <position position="178"/>
    </location>
    <ligand>
        <name>a divalent metal cation</name>
        <dbReference type="ChEBI" id="CHEBI:60240"/>
        <label>3</label>
    </ligand>
</feature>
<feature type="binding site" evidence="1">
    <location>
        <begin position="192"/>
        <end position="199"/>
    </location>
    <ligand>
        <name>substrate</name>
    </ligand>
</feature>
<feature type="binding site" evidence="1">
    <location>
        <position position="219"/>
    </location>
    <ligand>
        <name>a divalent metal cation</name>
        <dbReference type="ChEBI" id="CHEBI:60240"/>
        <label>1</label>
    </ligand>
</feature>
<feature type="binding site" evidence="1">
    <location>
        <position position="219"/>
    </location>
    <ligand>
        <name>a divalent metal cation</name>
        <dbReference type="ChEBI" id="CHEBI:60240"/>
        <label>3</label>
    </ligand>
</feature>
<feature type="binding site" evidence="1">
    <location>
        <position position="241"/>
    </location>
    <ligand>
        <name>substrate</name>
    </ligand>
</feature>
<name>NUDC_SHIDS</name>
<keyword id="KW-0378">Hydrolase</keyword>
<keyword id="KW-0460">Magnesium</keyword>
<keyword id="KW-0464">Manganese</keyword>
<keyword id="KW-0479">Metal-binding</keyword>
<keyword id="KW-0520">NAD</keyword>
<keyword id="KW-1185">Reference proteome</keyword>
<keyword id="KW-0862">Zinc</keyword>
<accession>Q32AG9</accession>
<dbReference type="EC" id="3.6.1.-" evidence="1"/>
<dbReference type="EC" id="3.6.1.22" evidence="1"/>
<dbReference type="EMBL" id="CP000034">
    <property type="protein sequence ID" value="ABB63686.1"/>
    <property type="molecule type" value="Genomic_DNA"/>
</dbReference>
<dbReference type="RefSeq" id="WP_000373928.1">
    <property type="nucleotide sequence ID" value="NC_007606.1"/>
</dbReference>
<dbReference type="RefSeq" id="YP_405177.1">
    <property type="nucleotide sequence ID" value="NC_007606.1"/>
</dbReference>
<dbReference type="SMR" id="Q32AG9"/>
<dbReference type="STRING" id="300267.SDY_3730"/>
<dbReference type="EnsemblBacteria" id="ABB63686">
    <property type="protein sequence ID" value="ABB63686"/>
    <property type="gene ID" value="SDY_3730"/>
</dbReference>
<dbReference type="KEGG" id="sdy:SDY_3730"/>
<dbReference type="PATRIC" id="fig|300267.13.peg.4422"/>
<dbReference type="HOGENOM" id="CLU_037162_0_1_6"/>
<dbReference type="Proteomes" id="UP000002716">
    <property type="component" value="Chromosome"/>
</dbReference>
<dbReference type="GO" id="GO:0005829">
    <property type="term" value="C:cytosol"/>
    <property type="evidence" value="ECO:0007669"/>
    <property type="project" value="TreeGrafter"/>
</dbReference>
<dbReference type="GO" id="GO:0000287">
    <property type="term" value="F:magnesium ion binding"/>
    <property type="evidence" value="ECO:0007669"/>
    <property type="project" value="UniProtKB-UniRule"/>
</dbReference>
<dbReference type="GO" id="GO:0030145">
    <property type="term" value="F:manganese ion binding"/>
    <property type="evidence" value="ECO:0007669"/>
    <property type="project" value="UniProtKB-UniRule"/>
</dbReference>
<dbReference type="GO" id="GO:0000210">
    <property type="term" value="F:NAD+ diphosphatase activity"/>
    <property type="evidence" value="ECO:0007669"/>
    <property type="project" value="UniProtKB-UniRule"/>
</dbReference>
<dbReference type="GO" id="GO:0035529">
    <property type="term" value="F:NADH pyrophosphatase activity"/>
    <property type="evidence" value="ECO:0007669"/>
    <property type="project" value="TreeGrafter"/>
</dbReference>
<dbReference type="GO" id="GO:0110153">
    <property type="term" value="F:RNA NAD-cap (NMN-forming) hydrolase activity"/>
    <property type="evidence" value="ECO:0007669"/>
    <property type="project" value="RHEA"/>
</dbReference>
<dbReference type="GO" id="GO:0008270">
    <property type="term" value="F:zinc ion binding"/>
    <property type="evidence" value="ECO:0007669"/>
    <property type="project" value="UniProtKB-UniRule"/>
</dbReference>
<dbReference type="GO" id="GO:0019677">
    <property type="term" value="P:NAD catabolic process"/>
    <property type="evidence" value="ECO:0007669"/>
    <property type="project" value="TreeGrafter"/>
</dbReference>
<dbReference type="GO" id="GO:0006734">
    <property type="term" value="P:NADH metabolic process"/>
    <property type="evidence" value="ECO:0007669"/>
    <property type="project" value="TreeGrafter"/>
</dbReference>
<dbReference type="GO" id="GO:0006742">
    <property type="term" value="P:NADP catabolic process"/>
    <property type="evidence" value="ECO:0007669"/>
    <property type="project" value="TreeGrafter"/>
</dbReference>
<dbReference type="CDD" id="cd03429">
    <property type="entry name" value="NUDIX_NADH_pyrophosphatase_Nudt13"/>
    <property type="match status" value="1"/>
</dbReference>
<dbReference type="FunFam" id="3.90.79.10:FF:000004">
    <property type="entry name" value="NADH pyrophosphatase"/>
    <property type="match status" value="1"/>
</dbReference>
<dbReference type="FunFam" id="3.90.79.20:FF:000001">
    <property type="entry name" value="NADH pyrophosphatase"/>
    <property type="match status" value="1"/>
</dbReference>
<dbReference type="Gene3D" id="3.90.79.20">
    <property type="match status" value="1"/>
</dbReference>
<dbReference type="Gene3D" id="3.90.79.10">
    <property type="entry name" value="Nucleoside Triphosphate Pyrophosphohydrolase"/>
    <property type="match status" value="1"/>
</dbReference>
<dbReference type="HAMAP" id="MF_00297">
    <property type="entry name" value="Nudix_NudC"/>
    <property type="match status" value="1"/>
</dbReference>
<dbReference type="InterPro" id="IPR050241">
    <property type="entry name" value="NAD-cap_RNA_hydrolase_NudC"/>
</dbReference>
<dbReference type="InterPro" id="IPR049734">
    <property type="entry name" value="NudC-like_C"/>
</dbReference>
<dbReference type="InterPro" id="IPR015797">
    <property type="entry name" value="NUDIX_hydrolase-like_dom_sf"/>
</dbReference>
<dbReference type="InterPro" id="IPR020084">
    <property type="entry name" value="NUDIX_hydrolase_CS"/>
</dbReference>
<dbReference type="InterPro" id="IPR000086">
    <property type="entry name" value="NUDIX_hydrolase_dom"/>
</dbReference>
<dbReference type="InterPro" id="IPR022925">
    <property type="entry name" value="RNA_Hydrolase_NudC"/>
</dbReference>
<dbReference type="InterPro" id="IPR015376">
    <property type="entry name" value="Znr_NADH_PPase"/>
</dbReference>
<dbReference type="NCBIfam" id="NF001299">
    <property type="entry name" value="PRK00241.1"/>
    <property type="match status" value="1"/>
</dbReference>
<dbReference type="PANTHER" id="PTHR42904:SF6">
    <property type="entry name" value="NAD-CAPPED RNA HYDROLASE NUDT12"/>
    <property type="match status" value="1"/>
</dbReference>
<dbReference type="PANTHER" id="PTHR42904">
    <property type="entry name" value="NUDIX HYDROLASE, NUDC SUBFAMILY"/>
    <property type="match status" value="1"/>
</dbReference>
<dbReference type="Pfam" id="PF00293">
    <property type="entry name" value="NUDIX"/>
    <property type="match status" value="1"/>
</dbReference>
<dbReference type="Pfam" id="PF09297">
    <property type="entry name" value="Zn_ribbon_NUD"/>
    <property type="match status" value="1"/>
</dbReference>
<dbReference type="SUPFAM" id="SSF55811">
    <property type="entry name" value="Nudix"/>
    <property type="match status" value="2"/>
</dbReference>
<dbReference type="PROSITE" id="PS51462">
    <property type="entry name" value="NUDIX"/>
    <property type="match status" value="1"/>
</dbReference>
<dbReference type="PROSITE" id="PS00893">
    <property type="entry name" value="NUDIX_BOX"/>
    <property type="match status" value="1"/>
</dbReference>
<sequence>MDRIIEKLDHGWWVVSHEQKLWLPKGELPYGEAANFDLVGQRALQIGEWQGEPVWLIQQQRRHDMGSVRQVIDLDVGLFLLAGRGVQLAEFYRSHKYCGYCGHEMYPSKTEWAMLCSHCRERYYPQIAPCIIVAIRRDDSILLAQHTRHRNGVHTVLAGFVEVGETLEQAVAREVMEESGIKVKNLRYVTSQPWPFPQSLMTAFMADYDSGDIVIDPKELLEANWYRYDNLPLLPVPGTVARRLIEDTVALCRAEYE</sequence>
<comment type="function">
    <text evidence="1">mRNA decapping enzyme that specifically removes the nicotinamide adenine dinucleotide (NAD) cap from a subset of mRNAs by hydrolyzing the diphosphate linkage to produce nicotinamide mononucleotide (NMN) and 5' monophosphate mRNA. The NAD-cap is present at the 5'-end of some mRNAs and stabilizes RNA against 5'-processing. Has preference for mRNAs with a 5'-end purine. Catalyzes the hydrolysis of a broad range of dinucleotide pyrophosphates.</text>
</comment>
<comment type="catalytic activity">
    <reaction evidence="1">
        <text>a 5'-end NAD(+)-phospho-ribonucleoside in mRNA + H2O = a 5'-end phospho-adenosine-phospho-ribonucleoside in mRNA + beta-nicotinamide D-ribonucleotide + 2 H(+)</text>
        <dbReference type="Rhea" id="RHEA:60876"/>
        <dbReference type="Rhea" id="RHEA-COMP:15698"/>
        <dbReference type="Rhea" id="RHEA-COMP:15719"/>
        <dbReference type="ChEBI" id="CHEBI:14649"/>
        <dbReference type="ChEBI" id="CHEBI:15377"/>
        <dbReference type="ChEBI" id="CHEBI:15378"/>
        <dbReference type="ChEBI" id="CHEBI:144029"/>
        <dbReference type="ChEBI" id="CHEBI:144051"/>
    </reaction>
    <physiologicalReaction direction="left-to-right" evidence="1">
        <dbReference type="Rhea" id="RHEA:60877"/>
    </physiologicalReaction>
</comment>
<comment type="catalytic activity">
    <reaction evidence="1">
        <text>NAD(+) + H2O = beta-nicotinamide D-ribonucleotide + AMP + 2 H(+)</text>
        <dbReference type="Rhea" id="RHEA:11800"/>
        <dbReference type="ChEBI" id="CHEBI:14649"/>
        <dbReference type="ChEBI" id="CHEBI:15377"/>
        <dbReference type="ChEBI" id="CHEBI:15378"/>
        <dbReference type="ChEBI" id="CHEBI:57540"/>
        <dbReference type="ChEBI" id="CHEBI:456215"/>
        <dbReference type="EC" id="3.6.1.22"/>
    </reaction>
</comment>
<comment type="catalytic activity">
    <reaction evidence="1">
        <text>NADH + H2O = reduced beta-nicotinamide D-ribonucleotide + AMP + 2 H(+)</text>
        <dbReference type="Rhea" id="RHEA:48868"/>
        <dbReference type="ChEBI" id="CHEBI:15377"/>
        <dbReference type="ChEBI" id="CHEBI:15378"/>
        <dbReference type="ChEBI" id="CHEBI:57945"/>
        <dbReference type="ChEBI" id="CHEBI:90832"/>
        <dbReference type="ChEBI" id="CHEBI:456215"/>
        <dbReference type="EC" id="3.6.1.22"/>
    </reaction>
</comment>
<comment type="cofactor">
    <cofactor evidence="1">
        <name>Mg(2+)</name>
        <dbReference type="ChEBI" id="CHEBI:18420"/>
    </cofactor>
    <cofactor evidence="1">
        <name>Mn(2+)</name>
        <dbReference type="ChEBI" id="CHEBI:29035"/>
    </cofactor>
    <text evidence="1">Divalent metal cations. Mg(2+) or Mn(2+).</text>
</comment>
<comment type="cofactor">
    <cofactor evidence="1">
        <name>Zn(2+)</name>
        <dbReference type="ChEBI" id="CHEBI:29105"/>
    </cofactor>
    <text evidence="1">Binds 1 zinc ion per subunit.</text>
</comment>
<comment type="subunit">
    <text evidence="1">Homodimer.</text>
</comment>
<comment type="similarity">
    <text evidence="1">Belongs to the Nudix hydrolase family. NudC subfamily.</text>
</comment>
<organism>
    <name type="scientific">Shigella dysenteriae serotype 1 (strain Sd197)</name>
    <dbReference type="NCBI Taxonomy" id="300267"/>
    <lineage>
        <taxon>Bacteria</taxon>
        <taxon>Pseudomonadati</taxon>
        <taxon>Pseudomonadota</taxon>
        <taxon>Gammaproteobacteria</taxon>
        <taxon>Enterobacterales</taxon>
        <taxon>Enterobacteriaceae</taxon>
        <taxon>Shigella</taxon>
    </lineage>
</organism>
<evidence type="ECO:0000255" key="1">
    <source>
        <dbReference type="HAMAP-Rule" id="MF_00297"/>
    </source>
</evidence>
<protein>
    <recommendedName>
        <fullName evidence="1">NAD-capped RNA hydrolase NudC</fullName>
        <shortName evidence="1">DeNADding enzyme NudC</shortName>
        <ecNumber evidence="1">3.6.1.-</ecNumber>
    </recommendedName>
    <alternativeName>
        <fullName evidence="1">NADH pyrophosphatase</fullName>
        <ecNumber evidence="1">3.6.1.22</ecNumber>
    </alternativeName>
</protein>
<reference key="1">
    <citation type="journal article" date="2005" name="Nucleic Acids Res.">
        <title>Genome dynamics and diversity of Shigella species, the etiologic agents of bacillary dysentery.</title>
        <authorList>
            <person name="Yang F."/>
            <person name="Yang J."/>
            <person name="Zhang X."/>
            <person name="Chen L."/>
            <person name="Jiang Y."/>
            <person name="Yan Y."/>
            <person name="Tang X."/>
            <person name="Wang J."/>
            <person name="Xiong Z."/>
            <person name="Dong J."/>
            <person name="Xue Y."/>
            <person name="Zhu Y."/>
            <person name="Xu X."/>
            <person name="Sun L."/>
            <person name="Chen S."/>
            <person name="Nie H."/>
            <person name="Peng J."/>
            <person name="Xu J."/>
            <person name="Wang Y."/>
            <person name="Yuan Z."/>
            <person name="Wen Y."/>
            <person name="Yao Z."/>
            <person name="Shen Y."/>
            <person name="Qiang B."/>
            <person name="Hou Y."/>
            <person name="Yu J."/>
            <person name="Jin Q."/>
        </authorList>
    </citation>
    <scope>NUCLEOTIDE SEQUENCE [LARGE SCALE GENOMIC DNA]</scope>
    <source>
        <strain>Sd197</strain>
    </source>
</reference>
<gene>
    <name evidence="1" type="primary">nudC</name>
    <name type="ordered locus">SDY_3730</name>
</gene>
<proteinExistence type="inferred from homology"/>